<proteinExistence type="evidence at protein level"/>
<comment type="function">
    <text evidence="3 5 6 7 9 10">Trithorax group (trxG) protein required for embryonic segmentation, development of the notum and wing margin, and photoreceptor differentiation. Required for the activation of genes such as Antp, Ubx and Eve. Binds to DNA without specific affinity, suggesting that it is recruited to promoters by promoter-specific proteins. Essential component of the Brahma complex, a multiprotein complex which is the equivalent of the yeast SWI/SNF complex and acts by remodeling the chromatin by catalyzing an ATP-dependent alteration in the structure of nucleosomal DNA. This complex can both serve as a transcriptional coactivator or corepressor, depending on the context. Acts as an essential coactivator for Zeste, which recruits the whole complex to specific genes. In contrast, it acts as a corepressor for Wg target genes, possibly via an interaction with Pan and Gro. It also acts as a negative regulator for proneural achaete-scute, when it is directly recruited by Pan and Chi. Also represses E2f activation.</text>
</comment>
<comment type="subunit">
    <text evidence="4 5 7">Component of the Brahma complex, which is composed of Brm, Osa, Mor, Snr1/Bap45, Bap111/Dalao, Bap55, Bap60 and Bap47. Interacts with Pnr and Chi via its EHD domain.</text>
</comment>
<comment type="interaction">
    <interactant intactId="EBI-115993">
        <id>Q8IN94</id>
    </interactant>
    <interactant intactId="EBI-868480">
        <id>P25439</id>
        <label>brm</label>
    </interactant>
    <organismsDiffer>false</organismsDiffer>
    <experiments>5</experiments>
</comment>
<comment type="subcellular location">
    <subcellularLocation>
        <location evidence="1 9">Nucleus</location>
    </subcellularLocation>
</comment>
<comment type="tissue specificity">
    <text evidence="9">Ubiquitously expressed in early embryo. In third instar larvae, it is ubiquitously expressed in wing and eye-antenna imaginal disks, with a stronger expression in a band just anterior to the morphogenetic furrow.</text>
</comment>
<comment type="developmental stage">
    <text evidence="9 10">Expressed both maternally and zygotically.</text>
</comment>
<comment type="domain">
    <text>The ARID domains mediates the binding to DNA.</text>
</comment>
<comment type="sequence caution" evidence="11">
    <conflict type="erroneous gene model prediction">
        <sequence resource="EMBL-CDS" id="AAF55457"/>
    </conflict>
</comment>
<reference key="1">
    <citation type="journal article" date="1997" name="Genes Dev.">
        <title>Eyelid antagonizes wingless signaling during Drosophila development and has homology to the Bright family of DNA-binding proteins.</title>
        <authorList>
            <person name="Treisman J.E."/>
            <person name="Luk A."/>
            <person name="Rubin G.M."/>
            <person name="Heberlein U."/>
        </authorList>
    </citation>
    <scope>NUCLEOTIDE SEQUENCE [MRNA]</scope>
    <scope>FUNCTION</scope>
    <scope>SUBCELLULAR LOCATION</scope>
    <scope>TISSUE SPECIFICITY</scope>
    <scope>DEVELOPMENTAL STAGE</scope>
</reference>
<reference key="2">
    <citation type="journal article" date="2000" name="Science">
        <title>The genome sequence of Drosophila melanogaster.</title>
        <authorList>
            <person name="Adams M.D."/>
            <person name="Celniker S.E."/>
            <person name="Holt R.A."/>
            <person name="Evans C.A."/>
            <person name="Gocayne J.D."/>
            <person name="Amanatides P.G."/>
            <person name="Scherer S.E."/>
            <person name="Li P.W."/>
            <person name="Hoskins R.A."/>
            <person name="Galle R.F."/>
            <person name="George R.A."/>
            <person name="Lewis S.E."/>
            <person name="Richards S."/>
            <person name="Ashburner M."/>
            <person name="Henderson S.N."/>
            <person name="Sutton G.G."/>
            <person name="Wortman J.R."/>
            <person name="Yandell M.D."/>
            <person name="Zhang Q."/>
            <person name="Chen L.X."/>
            <person name="Brandon R.C."/>
            <person name="Rogers Y.-H.C."/>
            <person name="Blazej R.G."/>
            <person name="Champe M."/>
            <person name="Pfeiffer B.D."/>
            <person name="Wan K.H."/>
            <person name="Doyle C."/>
            <person name="Baxter E.G."/>
            <person name="Helt G."/>
            <person name="Nelson C.R."/>
            <person name="Miklos G.L.G."/>
            <person name="Abril J.F."/>
            <person name="Agbayani A."/>
            <person name="An H.-J."/>
            <person name="Andrews-Pfannkoch C."/>
            <person name="Baldwin D."/>
            <person name="Ballew R.M."/>
            <person name="Basu A."/>
            <person name="Baxendale J."/>
            <person name="Bayraktaroglu L."/>
            <person name="Beasley E.M."/>
            <person name="Beeson K.Y."/>
            <person name="Benos P.V."/>
            <person name="Berman B.P."/>
            <person name="Bhandari D."/>
            <person name="Bolshakov S."/>
            <person name="Borkova D."/>
            <person name="Botchan M.R."/>
            <person name="Bouck J."/>
            <person name="Brokstein P."/>
            <person name="Brottier P."/>
            <person name="Burtis K.C."/>
            <person name="Busam D.A."/>
            <person name="Butler H."/>
            <person name="Cadieu E."/>
            <person name="Center A."/>
            <person name="Chandra I."/>
            <person name="Cherry J.M."/>
            <person name="Cawley S."/>
            <person name="Dahlke C."/>
            <person name="Davenport L.B."/>
            <person name="Davies P."/>
            <person name="de Pablos B."/>
            <person name="Delcher A."/>
            <person name="Deng Z."/>
            <person name="Mays A.D."/>
            <person name="Dew I."/>
            <person name="Dietz S.M."/>
            <person name="Dodson K."/>
            <person name="Doup L.E."/>
            <person name="Downes M."/>
            <person name="Dugan-Rocha S."/>
            <person name="Dunkov B.C."/>
            <person name="Dunn P."/>
            <person name="Durbin K.J."/>
            <person name="Evangelista C.C."/>
            <person name="Ferraz C."/>
            <person name="Ferriera S."/>
            <person name="Fleischmann W."/>
            <person name="Fosler C."/>
            <person name="Gabrielian A.E."/>
            <person name="Garg N.S."/>
            <person name="Gelbart W.M."/>
            <person name="Glasser K."/>
            <person name="Glodek A."/>
            <person name="Gong F."/>
            <person name="Gorrell J.H."/>
            <person name="Gu Z."/>
            <person name="Guan P."/>
            <person name="Harris M."/>
            <person name="Harris N.L."/>
            <person name="Harvey D.A."/>
            <person name="Heiman T.J."/>
            <person name="Hernandez J.R."/>
            <person name="Houck J."/>
            <person name="Hostin D."/>
            <person name="Houston K.A."/>
            <person name="Howland T.J."/>
            <person name="Wei M.-H."/>
            <person name="Ibegwam C."/>
            <person name="Jalali M."/>
            <person name="Kalush F."/>
            <person name="Karpen G.H."/>
            <person name="Ke Z."/>
            <person name="Kennison J.A."/>
            <person name="Ketchum K.A."/>
            <person name="Kimmel B.E."/>
            <person name="Kodira C.D."/>
            <person name="Kraft C.L."/>
            <person name="Kravitz S."/>
            <person name="Kulp D."/>
            <person name="Lai Z."/>
            <person name="Lasko P."/>
            <person name="Lei Y."/>
            <person name="Levitsky A.A."/>
            <person name="Li J.H."/>
            <person name="Li Z."/>
            <person name="Liang Y."/>
            <person name="Lin X."/>
            <person name="Liu X."/>
            <person name="Mattei B."/>
            <person name="McIntosh T.C."/>
            <person name="McLeod M.P."/>
            <person name="McPherson D."/>
            <person name="Merkulov G."/>
            <person name="Milshina N.V."/>
            <person name="Mobarry C."/>
            <person name="Morris J."/>
            <person name="Moshrefi A."/>
            <person name="Mount S.M."/>
            <person name="Moy M."/>
            <person name="Murphy B."/>
            <person name="Murphy L."/>
            <person name="Muzny D.M."/>
            <person name="Nelson D.L."/>
            <person name="Nelson D.R."/>
            <person name="Nelson K.A."/>
            <person name="Nixon K."/>
            <person name="Nusskern D.R."/>
            <person name="Pacleb J.M."/>
            <person name="Palazzolo M."/>
            <person name="Pittman G.S."/>
            <person name="Pan S."/>
            <person name="Pollard J."/>
            <person name="Puri V."/>
            <person name="Reese M.G."/>
            <person name="Reinert K."/>
            <person name="Remington K."/>
            <person name="Saunders R.D.C."/>
            <person name="Scheeler F."/>
            <person name="Shen H."/>
            <person name="Shue B.C."/>
            <person name="Siden-Kiamos I."/>
            <person name="Simpson M."/>
            <person name="Skupski M.P."/>
            <person name="Smith T.J."/>
            <person name="Spier E."/>
            <person name="Spradling A.C."/>
            <person name="Stapleton M."/>
            <person name="Strong R."/>
            <person name="Sun E."/>
            <person name="Svirskas R."/>
            <person name="Tector C."/>
            <person name="Turner R."/>
            <person name="Venter E."/>
            <person name="Wang A.H."/>
            <person name="Wang X."/>
            <person name="Wang Z.-Y."/>
            <person name="Wassarman D.A."/>
            <person name="Weinstock G.M."/>
            <person name="Weissenbach J."/>
            <person name="Williams S.M."/>
            <person name="Woodage T."/>
            <person name="Worley K.C."/>
            <person name="Wu D."/>
            <person name="Yang S."/>
            <person name="Yao Q.A."/>
            <person name="Ye J."/>
            <person name="Yeh R.-F."/>
            <person name="Zaveri J.S."/>
            <person name="Zhan M."/>
            <person name="Zhang G."/>
            <person name="Zhao Q."/>
            <person name="Zheng L."/>
            <person name="Zheng X.H."/>
            <person name="Zhong F.N."/>
            <person name="Zhong W."/>
            <person name="Zhou X."/>
            <person name="Zhu S.C."/>
            <person name="Zhu X."/>
            <person name="Smith H.O."/>
            <person name="Gibbs R.A."/>
            <person name="Myers E.W."/>
            <person name="Rubin G.M."/>
            <person name="Venter J.C."/>
        </authorList>
    </citation>
    <scope>NUCLEOTIDE SEQUENCE [LARGE SCALE GENOMIC DNA]</scope>
    <source>
        <strain>Berkeley</strain>
    </source>
</reference>
<reference key="3">
    <citation type="journal article" date="2002" name="Genome Biol.">
        <title>Annotation of the Drosophila melanogaster euchromatic genome: a systematic review.</title>
        <authorList>
            <person name="Misra S."/>
            <person name="Crosby M.A."/>
            <person name="Mungall C.J."/>
            <person name="Matthews B.B."/>
            <person name="Campbell K.S."/>
            <person name="Hradecky P."/>
            <person name="Huang Y."/>
            <person name="Kaminker J.S."/>
            <person name="Millburn G.H."/>
            <person name="Prochnik S.E."/>
            <person name="Smith C.D."/>
            <person name="Tupy J.L."/>
            <person name="Whitfield E.J."/>
            <person name="Bayraktaroglu L."/>
            <person name="Berman B.P."/>
            <person name="Bettencourt B.R."/>
            <person name="Celniker S.E."/>
            <person name="de Grey A.D.N.J."/>
            <person name="Drysdale R.A."/>
            <person name="Harris N.L."/>
            <person name="Richter J."/>
            <person name="Russo S."/>
            <person name="Schroeder A.J."/>
            <person name="Shu S.Q."/>
            <person name="Stapleton M."/>
            <person name="Yamada C."/>
            <person name="Ashburner M."/>
            <person name="Gelbart W.M."/>
            <person name="Rubin G.M."/>
            <person name="Lewis S.E."/>
        </authorList>
    </citation>
    <scope>GENOME REANNOTATION</scope>
    <source>
        <strain>Berkeley</strain>
    </source>
</reference>
<reference key="4">
    <citation type="journal article" date="1999" name="Development">
        <title>The trithorax group gene osa encodes an ARID-domain protein that genetically interacts with the brahma chromatin-remodeling factor to regulate transcription.</title>
        <authorList>
            <person name="Vazquez M."/>
            <person name="Moore L."/>
            <person name="Kennison J.A."/>
        </authorList>
    </citation>
    <scope>FUNCTION</scope>
    <scope>DEVELOPMENTAL STAGE</scope>
</reference>
<reference key="5">
    <citation type="journal article" date="1999" name="EMBO J.">
        <title>Osa associates with the Brahma chromatin remodeling complex and promotes the activation of some target genes.</title>
        <authorList>
            <person name="Collins R.T."/>
            <person name="Furukawa T."/>
            <person name="Tanese N."/>
            <person name="Treisman J.E."/>
        </authorList>
    </citation>
    <scope>DNA-BINDING</scope>
    <scope>IDENTIFICATION IN A BRAHMA COMPLEX WITH BRM AND SNR1</scope>
</reference>
<reference key="6">
    <citation type="journal article" date="1999" name="Genetics">
        <title>A genetic screen for modifiers of E2F in Drosophila melanogaster.</title>
        <authorList>
            <person name="Staehling-Hampton K."/>
            <person name="Ciampa P.J."/>
            <person name="Brook A."/>
            <person name="Dyson N."/>
        </authorList>
    </citation>
    <scope>FUNCTION</scope>
</reference>
<reference key="7">
    <citation type="journal article" date="2000" name="Genes Dev.">
        <title>The Drosophila brahma complex is an essential coactivator for the trithorax group protein zeste.</title>
        <authorList>
            <person name="Kal A.J."/>
            <person name="Mahmoudi T."/>
            <person name="Zak N.B."/>
            <person name="Verrijzer C.P."/>
        </authorList>
    </citation>
    <scope>IDENTIFICATION IN A BRAHMA COMPLEX WITH BRM; OSA; MOR; SNR1; DALAO; BAP55; BAP60 AND BAP47</scope>
    <scope>FUNCTION AS A COACTIVATOR</scope>
</reference>
<reference key="8">
    <citation type="journal article" date="2000" name="Genes Dev.">
        <title>Osa-containing Brahma chromatin remodeling complexes are required for the repression of wingless target genes.</title>
        <authorList>
            <person name="Collins R.T."/>
            <person name="Treisman J.E."/>
        </authorList>
    </citation>
    <scope>FUNCTION AS A COREPRESSOR</scope>
</reference>
<reference key="9">
    <citation type="journal article" date="2003" name="Genes Dev.">
        <title>Enhancer-promoter communication mediated by Chip during Pannier-driven proneural patterning is regulated by Osa.</title>
        <authorList>
            <person name="Heitzler P."/>
            <person name="Vanolst L."/>
            <person name="Biryukova I."/>
            <person name="Ramain P."/>
        </authorList>
    </citation>
    <scope>FUNCTION AS A COREPRESSOR</scope>
    <scope>INTERACTION WITH PNR AND CHI</scope>
</reference>
<reference key="10">
    <citation type="journal article" date="2008" name="J. Proteome Res.">
        <title>Phosphoproteome analysis of Drosophila melanogaster embryos.</title>
        <authorList>
            <person name="Zhai B."/>
            <person name="Villen J."/>
            <person name="Beausoleil S.A."/>
            <person name="Mintseris J."/>
            <person name="Gygi S.P."/>
        </authorList>
    </citation>
    <scope>PHOSPHORYLATION [LARGE SCALE ANALYSIS] AT THR-384; THR-747; SER-1930; SER-1932; SER-2081; SER-2168; SER-2169; THR-2176 AND SER-2181</scope>
    <scope>IDENTIFICATION BY MASS SPECTROMETRY</scope>
    <source>
        <tissue>Embryo</tissue>
    </source>
</reference>
<dbReference type="EMBL" id="AF053091">
    <property type="protein sequence ID" value="AAC06254.1"/>
    <property type="molecule type" value="mRNA"/>
</dbReference>
<dbReference type="EMBL" id="AE014297">
    <property type="protein sequence ID" value="AAF55457.1"/>
    <property type="status" value="ALT_SEQ"/>
    <property type="molecule type" value="Genomic_DNA"/>
</dbReference>
<dbReference type="EMBL" id="AE014297">
    <property type="protein sequence ID" value="AAN13750.1"/>
    <property type="molecule type" value="Genomic_DNA"/>
</dbReference>
<dbReference type="PIR" id="T13049">
    <property type="entry name" value="T13049"/>
</dbReference>
<dbReference type="RefSeq" id="NP_001163639.1">
    <property type="nucleotide sequence ID" value="NM_001170168.2"/>
</dbReference>
<dbReference type="RefSeq" id="NP_524392.2">
    <property type="nucleotide sequence ID" value="NM_079668.3"/>
</dbReference>
<dbReference type="RefSeq" id="NP_732263.1">
    <property type="nucleotide sequence ID" value="NM_169775.2"/>
</dbReference>
<dbReference type="SMR" id="Q8IN94"/>
<dbReference type="BioGRID" id="67162">
    <property type="interactions" value="62"/>
</dbReference>
<dbReference type="ComplexPortal" id="CPX-2746">
    <property type="entry name" value="Brahma SWI/SNF ATP-dependent chromatin remodeling complex"/>
</dbReference>
<dbReference type="DIP" id="DIP-20699N"/>
<dbReference type="FunCoup" id="Q8IN94">
    <property type="interactions" value="2216"/>
</dbReference>
<dbReference type="IntAct" id="Q8IN94">
    <property type="interactions" value="57"/>
</dbReference>
<dbReference type="MINT" id="Q8IN94"/>
<dbReference type="STRING" id="7227.FBpp0088543"/>
<dbReference type="GlyGen" id="Q8IN94">
    <property type="glycosylation" value="8 sites"/>
</dbReference>
<dbReference type="iPTMnet" id="Q8IN94"/>
<dbReference type="PaxDb" id="7227-FBpp0088543"/>
<dbReference type="EnsemblMetazoa" id="FBtr0089581">
    <property type="protein sequence ID" value="FBpp0088543"/>
    <property type="gene ID" value="FBgn0261885"/>
</dbReference>
<dbReference type="EnsemblMetazoa" id="FBtr0301487">
    <property type="protein sequence ID" value="FBpp0290702"/>
    <property type="gene ID" value="FBgn0261885"/>
</dbReference>
<dbReference type="GeneID" id="42130"/>
<dbReference type="KEGG" id="dme:Dmel_CG7467"/>
<dbReference type="AGR" id="FB:FBgn0261885"/>
<dbReference type="CTD" id="42130"/>
<dbReference type="FlyBase" id="FBgn0261885">
    <property type="gene designation" value="osa"/>
</dbReference>
<dbReference type="VEuPathDB" id="VectorBase:FBgn0261885"/>
<dbReference type="eggNOG" id="KOG2510">
    <property type="taxonomic scope" value="Eukaryota"/>
</dbReference>
<dbReference type="GeneTree" id="ENSGT00940000169092"/>
<dbReference type="InParanoid" id="Q8IN94"/>
<dbReference type="OMA" id="CRPIDMD"/>
<dbReference type="OrthoDB" id="8709537at2759"/>
<dbReference type="PhylomeDB" id="Q8IN94"/>
<dbReference type="Reactome" id="R-DME-3214858">
    <property type="pathway name" value="RMTs methylate histone arginines"/>
</dbReference>
<dbReference type="Reactome" id="R-DME-8939243">
    <property type="pathway name" value="RUNX1 interacts with co-factors whose precise effect on RUNX1 targets is not known"/>
</dbReference>
<dbReference type="BioGRID-ORCS" id="42130">
    <property type="hits" value="1 hit in 3 CRISPR screens"/>
</dbReference>
<dbReference type="ChiTaRS" id="osa">
    <property type="organism name" value="fly"/>
</dbReference>
<dbReference type="GenomeRNAi" id="42130"/>
<dbReference type="PRO" id="PR:Q8IN94"/>
<dbReference type="Proteomes" id="UP000000803">
    <property type="component" value="Chromosome 3R"/>
</dbReference>
<dbReference type="Bgee" id="FBgn0261885">
    <property type="expression patterns" value="Expressed in distal medullary amacrine neuron Dm11 in insect head and 281 other cell types or tissues"/>
</dbReference>
<dbReference type="ExpressionAtlas" id="Q8IN94">
    <property type="expression patterns" value="baseline and differential"/>
</dbReference>
<dbReference type="GO" id="GO:0035060">
    <property type="term" value="C:brahma complex"/>
    <property type="evidence" value="ECO:0000314"/>
    <property type="project" value="FlyBase"/>
</dbReference>
<dbReference type="GO" id="GO:0071565">
    <property type="term" value="C:nBAF complex"/>
    <property type="evidence" value="ECO:0000318"/>
    <property type="project" value="GO_Central"/>
</dbReference>
<dbReference type="GO" id="GO:0005654">
    <property type="term" value="C:nucleoplasm"/>
    <property type="evidence" value="ECO:0007005"/>
    <property type="project" value="FlyBase"/>
</dbReference>
<dbReference type="GO" id="GO:0005634">
    <property type="term" value="C:nucleus"/>
    <property type="evidence" value="ECO:0000314"/>
    <property type="project" value="UniProtKB"/>
</dbReference>
<dbReference type="GO" id="GO:0005700">
    <property type="term" value="C:polytene chromosome"/>
    <property type="evidence" value="ECO:0000314"/>
    <property type="project" value="FlyBase"/>
</dbReference>
<dbReference type="GO" id="GO:0016514">
    <property type="term" value="C:SWI/SNF complex"/>
    <property type="evidence" value="ECO:0000318"/>
    <property type="project" value="GO_Central"/>
</dbReference>
<dbReference type="GO" id="GO:0003677">
    <property type="term" value="F:DNA binding"/>
    <property type="evidence" value="ECO:0000314"/>
    <property type="project" value="UniProtKB"/>
</dbReference>
<dbReference type="GO" id="GO:0006338">
    <property type="term" value="P:chromatin remodeling"/>
    <property type="evidence" value="ECO:0007669"/>
    <property type="project" value="InterPro"/>
</dbReference>
<dbReference type="GO" id="GO:0007480">
    <property type="term" value="P:imaginal disc-derived leg morphogenesis"/>
    <property type="evidence" value="ECO:0000315"/>
    <property type="project" value="FlyBase"/>
</dbReference>
<dbReference type="GO" id="GO:0008587">
    <property type="term" value="P:imaginal disc-derived wing margin morphogenesis"/>
    <property type="evidence" value="ECO:0000315"/>
    <property type="project" value="UniProtKB"/>
</dbReference>
<dbReference type="GO" id="GO:0007476">
    <property type="term" value="P:imaginal disc-derived wing morphogenesis"/>
    <property type="evidence" value="ECO:0000315"/>
    <property type="project" value="FlyBase"/>
</dbReference>
<dbReference type="GO" id="GO:0008586">
    <property type="term" value="P:imaginal disc-derived wing vein morphogenesis"/>
    <property type="evidence" value="ECO:0000315"/>
    <property type="project" value="FlyBase"/>
</dbReference>
<dbReference type="GO" id="GO:0007406">
    <property type="term" value="P:negative regulation of neuroblast proliferation"/>
    <property type="evidence" value="ECO:0000316"/>
    <property type="project" value="FlyBase"/>
</dbReference>
<dbReference type="GO" id="GO:0014017">
    <property type="term" value="P:neuroblast fate commitment"/>
    <property type="evidence" value="ECO:0000315"/>
    <property type="project" value="FlyBase"/>
</dbReference>
<dbReference type="GO" id="GO:0046530">
    <property type="term" value="P:photoreceptor cell differentiation"/>
    <property type="evidence" value="ECO:0000315"/>
    <property type="project" value="UniProtKB"/>
</dbReference>
<dbReference type="GO" id="GO:0045893">
    <property type="term" value="P:positive regulation of DNA-templated transcription"/>
    <property type="evidence" value="ECO:0000314"/>
    <property type="project" value="FlyBase"/>
</dbReference>
<dbReference type="GO" id="GO:0006355">
    <property type="term" value="P:regulation of DNA-templated transcription"/>
    <property type="evidence" value="ECO:0000314"/>
    <property type="project" value="UniProtKB"/>
</dbReference>
<dbReference type="GO" id="GO:0006357">
    <property type="term" value="P:regulation of transcription by RNA polymerase II"/>
    <property type="evidence" value="ECO:0000315"/>
    <property type="project" value="FlyBase"/>
</dbReference>
<dbReference type="GO" id="GO:0007379">
    <property type="term" value="P:segment specification"/>
    <property type="evidence" value="ECO:0000315"/>
    <property type="project" value="UniProtKB"/>
</dbReference>
<dbReference type="GO" id="GO:0048190">
    <property type="term" value="P:wing disc dorsal/ventral pattern formation"/>
    <property type="evidence" value="ECO:0000316"/>
    <property type="project" value="FlyBase"/>
</dbReference>
<dbReference type="GO" id="GO:0016055">
    <property type="term" value="P:Wnt signaling pathway"/>
    <property type="evidence" value="ECO:0000315"/>
    <property type="project" value="UniProtKB"/>
</dbReference>
<dbReference type="CDD" id="cd16865">
    <property type="entry name" value="ARID_ARID1A-like"/>
    <property type="match status" value="1"/>
</dbReference>
<dbReference type="FunFam" id="1.10.150.60:FF:000014">
    <property type="entry name" value="Osa, isoform C"/>
    <property type="match status" value="1"/>
</dbReference>
<dbReference type="Gene3D" id="1.10.150.60">
    <property type="entry name" value="ARID DNA-binding domain"/>
    <property type="match status" value="1"/>
</dbReference>
<dbReference type="InterPro" id="IPR001606">
    <property type="entry name" value="ARID_dom"/>
</dbReference>
<dbReference type="InterPro" id="IPR036431">
    <property type="entry name" value="ARID_dom_sf"/>
</dbReference>
<dbReference type="InterPro" id="IPR016024">
    <property type="entry name" value="ARM-type_fold"/>
</dbReference>
<dbReference type="InterPro" id="IPR021906">
    <property type="entry name" value="BAF250/Osa"/>
</dbReference>
<dbReference type="InterPro" id="IPR033388">
    <property type="entry name" value="BAF250_C"/>
</dbReference>
<dbReference type="PANTHER" id="PTHR12656">
    <property type="entry name" value="BRG-1 ASSOCIATED FACTOR 250 BAF250"/>
    <property type="match status" value="1"/>
</dbReference>
<dbReference type="PANTHER" id="PTHR12656:SF5">
    <property type="entry name" value="TRITHORAX GROUP PROTEIN OSA"/>
    <property type="match status" value="1"/>
</dbReference>
<dbReference type="Pfam" id="PF01388">
    <property type="entry name" value="ARID"/>
    <property type="match status" value="1"/>
</dbReference>
<dbReference type="Pfam" id="PF12031">
    <property type="entry name" value="BAF250_C"/>
    <property type="match status" value="1"/>
</dbReference>
<dbReference type="SMART" id="SM01014">
    <property type="entry name" value="ARID"/>
    <property type="match status" value="1"/>
</dbReference>
<dbReference type="SMART" id="SM00501">
    <property type="entry name" value="BRIGHT"/>
    <property type="match status" value="1"/>
</dbReference>
<dbReference type="SUPFAM" id="SSF46774">
    <property type="entry name" value="ARID-like"/>
    <property type="match status" value="1"/>
</dbReference>
<dbReference type="SUPFAM" id="SSF48371">
    <property type="entry name" value="ARM repeat"/>
    <property type="match status" value="1"/>
</dbReference>
<dbReference type="PROSITE" id="PS51011">
    <property type="entry name" value="ARID"/>
    <property type="match status" value="1"/>
</dbReference>
<feature type="chain" id="PRO_0000200593" description="Trithorax group protein osa">
    <location>
        <begin position="1"/>
        <end position="2716"/>
    </location>
</feature>
<feature type="domain" description="ARID" evidence="1">
    <location>
        <begin position="1000"/>
        <end position="1091"/>
    </location>
</feature>
<feature type="domain" description="EHD">
    <location>
        <begin position="1769"/>
        <end position="2517"/>
    </location>
</feature>
<feature type="region of interest" description="Disordered" evidence="2">
    <location>
        <begin position="1"/>
        <end position="969"/>
    </location>
</feature>
<feature type="region of interest" description="Disordered" evidence="2">
    <location>
        <begin position="1108"/>
        <end position="1766"/>
    </location>
</feature>
<feature type="region of interest" description="Disordered" evidence="2">
    <location>
        <begin position="1914"/>
        <end position="1936"/>
    </location>
</feature>
<feature type="region of interest" description="Disordered" evidence="2">
    <location>
        <begin position="2045"/>
        <end position="2123"/>
    </location>
</feature>
<feature type="region of interest" description="Disordered" evidence="2">
    <location>
        <begin position="2520"/>
        <end position="2617"/>
    </location>
</feature>
<feature type="region of interest" description="Disordered" evidence="2">
    <location>
        <begin position="2684"/>
        <end position="2716"/>
    </location>
</feature>
<feature type="compositionally biased region" description="Low complexity" evidence="2">
    <location>
        <begin position="7"/>
        <end position="38"/>
    </location>
</feature>
<feature type="compositionally biased region" description="Polar residues" evidence="2">
    <location>
        <begin position="54"/>
        <end position="64"/>
    </location>
</feature>
<feature type="compositionally biased region" description="Pro residues" evidence="2">
    <location>
        <begin position="69"/>
        <end position="86"/>
    </location>
</feature>
<feature type="compositionally biased region" description="Low complexity" evidence="2">
    <location>
        <begin position="164"/>
        <end position="180"/>
    </location>
</feature>
<feature type="compositionally biased region" description="Low complexity" evidence="2">
    <location>
        <begin position="212"/>
        <end position="222"/>
    </location>
</feature>
<feature type="compositionally biased region" description="Low complexity" evidence="2">
    <location>
        <begin position="238"/>
        <end position="257"/>
    </location>
</feature>
<feature type="compositionally biased region" description="Pro residues" evidence="2">
    <location>
        <begin position="258"/>
        <end position="272"/>
    </location>
</feature>
<feature type="compositionally biased region" description="Polar residues" evidence="2">
    <location>
        <begin position="294"/>
        <end position="312"/>
    </location>
</feature>
<feature type="compositionally biased region" description="Low complexity" evidence="2">
    <location>
        <begin position="320"/>
        <end position="346"/>
    </location>
</feature>
<feature type="compositionally biased region" description="Pro residues" evidence="2">
    <location>
        <begin position="350"/>
        <end position="359"/>
    </location>
</feature>
<feature type="compositionally biased region" description="Low complexity" evidence="2">
    <location>
        <begin position="360"/>
        <end position="377"/>
    </location>
</feature>
<feature type="compositionally biased region" description="Polar residues" evidence="2">
    <location>
        <begin position="394"/>
        <end position="403"/>
    </location>
</feature>
<feature type="compositionally biased region" description="Low complexity" evidence="2">
    <location>
        <begin position="411"/>
        <end position="423"/>
    </location>
</feature>
<feature type="compositionally biased region" description="Pro residues" evidence="2">
    <location>
        <begin position="424"/>
        <end position="466"/>
    </location>
</feature>
<feature type="compositionally biased region" description="Low complexity" evidence="2">
    <location>
        <begin position="467"/>
        <end position="476"/>
    </location>
</feature>
<feature type="compositionally biased region" description="Low complexity" evidence="2">
    <location>
        <begin position="509"/>
        <end position="526"/>
    </location>
</feature>
<feature type="compositionally biased region" description="Pro residues" evidence="2">
    <location>
        <begin position="557"/>
        <end position="571"/>
    </location>
</feature>
<feature type="compositionally biased region" description="Low complexity" evidence="2">
    <location>
        <begin position="572"/>
        <end position="594"/>
    </location>
</feature>
<feature type="compositionally biased region" description="Pro residues" evidence="2">
    <location>
        <begin position="595"/>
        <end position="604"/>
    </location>
</feature>
<feature type="compositionally biased region" description="Pro residues" evidence="2">
    <location>
        <begin position="651"/>
        <end position="669"/>
    </location>
</feature>
<feature type="compositionally biased region" description="Pro residues" evidence="2">
    <location>
        <begin position="747"/>
        <end position="760"/>
    </location>
</feature>
<feature type="compositionally biased region" description="Pro residues" evidence="2">
    <location>
        <begin position="806"/>
        <end position="818"/>
    </location>
</feature>
<feature type="compositionally biased region" description="Low complexity" evidence="2">
    <location>
        <begin position="819"/>
        <end position="838"/>
    </location>
</feature>
<feature type="compositionally biased region" description="Gly residues" evidence="2">
    <location>
        <begin position="839"/>
        <end position="851"/>
    </location>
</feature>
<feature type="compositionally biased region" description="Polar residues" evidence="2">
    <location>
        <begin position="859"/>
        <end position="868"/>
    </location>
</feature>
<feature type="compositionally biased region" description="Polar residues" evidence="2">
    <location>
        <begin position="879"/>
        <end position="904"/>
    </location>
</feature>
<feature type="compositionally biased region" description="Low complexity" evidence="2">
    <location>
        <begin position="1129"/>
        <end position="1139"/>
    </location>
</feature>
<feature type="compositionally biased region" description="Low complexity" evidence="2">
    <location>
        <begin position="1164"/>
        <end position="1173"/>
    </location>
</feature>
<feature type="compositionally biased region" description="Polar residues" evidence="2">
    <location>
        <begin position="1181"/>
        <end position="1193"/>
    </location>
</feature>
<feature type="compositionally biased region" description="Gly residues" evidence="2">
    <location>
        <begin position="1221"/>
        <end position="1256"/>
    </location>
</feature>
<feature type="compositionally biased region" description="Low complexity" evidence="2">
    <location>
        <begin position="1266"/>
        <end position="1288"/>
    </location>
</feature>
<feature type="compositionally biased region" description="Pro residues" evidence="2">
    <location>
        <begin position="1305"/>
        <end position="1318"/>
    </location>
</feature>
<feature type="compositionally biased region" description="Low complexity" evidence="2">
    <location>
        <begin position="1407"/>
        <end position="1427"/>
    </location>
</feature>
<feature type="compositionally biased region" description="Pro residues" evidence="2">
    <location>
        <begin position="1428"/>
        <end position="1438"/>
    </location>
</feature>
<feature type="compositionally biased region" description="Low complexity" evidence="2">
    <location>
        <begin position="1456"/>
        <end position="1471"/>
    </location>
</feature>
<feature type="compositionally biased region" description="Polar residues" evidence="2">
    <location>
        <begin position="1508"/>
        <end position="1524"/>
    </location>
</feature>
<feature type="compositionally biased region" description="Pro residues" evidence="2">
    <location>
        <begin position="1534"/>
        <end position="1548"/>
    </location>
</feature>
<feature type="compositionally biased region" description="Low complexity" evidence="2">
    <location>
        <begin position="1573"/>
        <end position="1593"/>
    </location>
</feature>
<feature type="compositionally biased region" description="Pro residues" evidence="2">
    <location>
        <begin position="1620"/>
        <end position="1629"/>
    </location>
</feature>
<feature type="compositionally biased region" description="Low complexity" evidence="2">
    <location>
        <begin position="1636"/>
        <end position="1652"/>
    </location>
</feature>
<feature type="compositionally biased region" description="Low complexity" evidence="2">
    <location>
        <begin position="1715"/>
        <end position="1729"/>
    </location>
</feature>
<feature type="compositionally biased region" description="Basic residues" evidence="2">
    <location>
        <begin position="1731"/>
        <end position="1744"/>
    </location>
</feature>
<feature type="compositionally biased region" description="Gly residues" evidence="2">
    <location>
        <begin position="1755"/>
        <end position="1766"/>
    </location>
</feature>
<feature type="compositionally biased region" description="Basic and acidic residues" evidence="2">
    <location>
        <begin position="2091"/>
        <end position="2100"/>
    </location>
</feature>
<feature type="compositionally biased region" description="Basic and acidic residues" evidence="2">
    <location>
        <begin position="2109"/>
        <end position="2123"/>
    </location>
</feature>
<feature type="compositionally biased region" description="Low complexity" evidence="2">
    <location>
        <begin position="2520"/>
        <end position="2566"/>
    </location>
</feature>
<feature type="compositionally biased region" description="Polar residues" evidence="2">
    <location>
        <begin position="2570"/>
        <end position="2579"/>
    </location>
</feature>
<feature type="compositionally biased region" description="Low complexity" evidence="2">
    <location>
        <begin position="2584"/>
        <end position="2617"/>
    </location>
</feature>
<feature type="compositionally biased region" description="Low complexity" evidence="2">
    <location>
        <begin position="2684"/>
        <end position="2701"/>
    </location>
</feature>
<feature type="modified residue" description="Phosphothreonine" evidence="8">
    <location>
        <position position="384"/>
    </location>
</feature>
<feature type="modified residue" description="Phosphothreonine" evidence="8">
    <location>
        <position position="747"/>
    </location>
</feature>
<feature type="modified residue" description="Phosphoserine" evidence="8">
    <location>
        <position position="1930"/>
    </location>
</feature>
<feature type="modified residue" description="Phosphoserine" evidence="8">
    <location>
        <position position="1932"/>
    </location>
</feature>
<feature type="modified residue" description="Phosphoserine" evidence="8">
    <location>
        <position position="2081"/>
    </location>
</feature>
<feature type="modified residue" description="Phosphoserine" evidence="8">
    <location>
        <position position="2168"/>
    </location>
</feature>
<feature type="modified residue" description="Phosphoserine" evidence="8">
    <location>
        <position position="2169"/>
    </location>
</feature>
<feature type="modified residue" description="Phosphothreonine" evidence="8">
    <location>
        <position position="2176"/>
    </location>
</feature>
<feature type="modified residue" description="Phosphoserine" evidence="8">
    <location>
        <position position="2181"/>
    </location>
</feature>
<feature type="sequence conflict" description="In Ref. 1; AAC06254." evidence="11" ref="1">
    <location>
        <position position="61"/>
    </location>
</feature>
<feature type="sequence conflict" description="In Ref. 1; AAC06254." evidence="11" ref="1">
    <original>V</original>
    <variation>G</variation>
    <location>
        <position position="1169"/>
    </location>
</feature>
<feature type="sequence conflict" description="In Ref. 1; AAC06254." evidence="11" ref="1">
    <original>M</original>
    <variation>T</variation>
    <location>
        <position position="1795"/>
    </location>
</feature>
<feature type="sequence conflict" description="In Ref. 1; AAC06254." evidence="11" ref="1">
    <original>G</original>
    <variation>E</variation>
    <location>
        <position position="2637"/>
    </location>
</feature>
<sequence>MNEKIKSPQTQQQQQGGAPAPAATPPSAGAAPGAATPPTSGPPTPNNNSNNGSDPSIQQQQQNVAPHPYGAPPPPGSGPGGPPGPDPAAVMHYHHLHQQQQQHPPPPHMQQQQHHGGPAPPPPGGAPEHAPGVKEEYTHLPPPHPHPAYGRYHADPNMDPYRYGQPLPGGKPPQQQQPHPQQQPPQQPGPGGSPNRPPQQRYIPGQPPQGPTPTLNSLLQSSNPPPPPQHRYANTYDPQQAAASAAAAAAAQQQQAGGPPPPGHGPPPPQHQPSPYGGQQGGWAPPPRPYSPQLGPSQQYRTPPPTNTSRGQSPYPPAHGQNSGSYPSSPQQQQQQQQQQQQQAGQQPGGPVPGGPPPGTGQQPPQQNTPPTSQYSPYPQRYPTPPGLPAGGSNHRTAYSTHQYPEPNRPWPGGSSPSPGSGHPLPPASPHHVPPLQQQPPPPPHVSAGGPPPSSSPGHAPSPSPQPSQASPSPHQELIGQNSNDSSSGGAHSGMGSGPPGTPNPQQVMRPTPSPTGSSGSRSMSPAVAQNHPISRPASNQSSSGGPMQQPPVGAGGPPPMPPHPGMPGGPPQQQQSQQQQASNSASSASNSPQQTPPPAPPPNQGMNNMATPPPPPQGAAGGGYPMPPHMHGGYKMGGPGQSPGAQGYPPQQPQQYPPGNYPPRPQYPPGAYATGPPPPPTSQAGAGGANSMPSGAQAGGYPGRGMPNHTGQYPPYQWVPPSPQQTVPGGAPGGAMVGNHVQGKGTPPPPVVGGPPPPQGSGSPRPLNYLKQHLQHKGGYGGSPTPPQGPQGYGNGPTGMHPGMPMGPPHHMGPPHGPTNMGPPTSTPPQSQMLQGGQPQGQGASGGPESGGPEHISQDNGISSSGPTGAAGMHAVTSVVTTGPDGTSMDEVSQQSTLSNASAASGEDPQCTTPKSRKNDPYSQSHLAPPSTSPHPVVMHPGGGPGEEYDMSSPPNWPRPAGSPQVFNHVPVPQEPFRSTITTTKKSDSLCKLYEMDDNPDRRGWLDKLRAFMEERRTPITACPTISKQPLDLYRLYIYVKERGGFVEVTKSKTWKDIAGLLGIGASSSAAYTLRKHYTKNLLTFECHFDRGDIDPLPIIQQVEAGSKKKTAKAASVPSPGGGHLDAGTTNSTGSSNSQDSFPAPPGSAPNAAIDGYPGYPGGSPYPVASGPQPDYATAGQMQRPPSQNNPQTPHPGAAAAVAAGDNISVSNPFEDPIAAGGGPGSGTGPGPGQGPGPGAASGGAGAVGAVGGGPQPHPPPPHSPHTAAQQAAGQHQQQHPQHQHPGLPGPPPPQQQQGQQGQQPPPSVGGGPPPAPQQHGPGQVPPSPQQHVRPAAGAPYPPGGSGYPTPVSRTPGSPYPSQPGAYGQYGSSDQYNATGPPGQPFGQGPGQYPPQNRNMYPPYGPEGEAPPTGANQYGPYGSRPYSQPPPGGPQPPTQTVAGGPPAGGAPGAPPSSAYPTGRPSQQDYYQPPPDQSPQPRRHPDFIKDSQPYPGYNARPQIYGAWQSGTQQYRPQYPSSPAPQNWGGAPPRGAAPPPGAPHGPPIQQPAGVAQWDQHRYPPQQGPPPPPQQQQQPQQQQQQPPYQQVAGPPGQQPPQAPPQWAQMNPGQTAQSGIAPPGSPLRPPSGPGQQNRMPGMPAQQQQSQQQGGVPQPPPQQASHGGVPSPGLPQVGPGGMVKPPYAMPPPPSQGVGQQVGQGPPGGMMSQKPPPMPGQAMQQQPLQQQPPSHQHPHPHQHPQHQHPHQMPPNQTAPGGYGPPGMPGGGAQLVKKELIFPHDSVESTTPVLYRRKRLMKADVCPVDPWRIFMAMRSGLLTECTWALDVLNVLLFDDSTVQFFGISNLPGLLTLLLEHFQKNLAEMFDERENEEQSALLAEDADDDADSGTVMCEKLRTSGRQPRCVRSISSYNRRRHYENMDRSGKDGAGNGSDSEDADEGIDLGQVRVQPNPEERSLLLSFTPNYTMVTRKGVPVRIQPAENDIFVDERQKAWDIDTNRLYEQLEPVGSDAWTYGFTEPDPLDGIIDVFKSEIVNIPFARYIRSDKKGRKRTELASSSRKPEIKTEENSTEEQTFNKKRRLVSGGSSSSGAHAEGKKSKLTSEEFAQPNAEVKKEPGTADSDCRPVDMDIEAPQQRLTNGVAPCSSTPAIFDPRTTAKDEARVLQRRRDSSFEDECYTRDEASLHLVSESQDSLARRCIALSNIFRNLTFVPGNETVLAKSTRFLAVLGRLLLLNHEHLRRTPKTRNYDREEDTDFSDSCSSLQGEREWWWDYLITIRENMLVAMANIAGHLELSRYDELIARPLIDGLLHWAVCPSAHGQDPFPSCGPNSVLSPQRLALEALCKLCVTDANVDLVIATPPFSRLEKLCAVLTRHLCRNEDQVLREFSVNLLHYLAAADSAMARTVALQSPCISYLVAFIEQAEQTALGVANQHGINYLRENPDSMGTSLDMLRRAAGTLLHLAKHPDNRSLFMQQEQRLLGLVMSHILDQQVALIISRVLYQVSRGTGPIHSVEFRLLQQRQQQQLRPGPAGKQAASAGGSATVKAETASTETSSTEAKPAPAATTAVVNDENSNSSQQLPPAATFNDVSNSSTNSNSCGTASSNQTNNSTTNSSHSSSAISSQSAITVAAPSAAATGAGSATAAAIASDQQQVSKVAAAAAAAAALSNASAAAAAAAAAAAASVGPPTSSSVSAGAAVAQPAAPPPTNAGTTTAVA</sequence>
<evidence type="ECO:0000255" key="1">
    <source>
        <dbReference type="PROSITE-ProRule" id="PRU00355"/>
    </source>
</evidence>
<evidence type="ECO:0000256" key="2">
    <source>
        <dbReference type="SAM" id="MobiDB-lite"/>
    </source>
</evidence>
<evidence type="ECO:0000269" key="3">
    <source>
    </source>
</evidence>
<evidence type="ECO:0000269" key="4">
    <source>
    </source>
</evidence>
<evidence type="ECO:0000269" key="5">
    <source>
    </source>
</evidence>
<evidence type="ECO:0000269" key="6">
    <source>
    </source>
</evidence>
<evidence type="ECO:0000269" key="7">
    <source>
    </source>
</evidence>
<evidence type="ECO:0000269" key="8">
    <source>
    </source>
</evidence>
<evidence type="ECO:0000269" key="9">
    <source>
    </source>
</evidence>
<evidence type="ECO:0000269" key="10">
    <source>
    </source>
</evidence>
<evidence type="ECO:0000305" key="11"/>
<keyword id="KW-0010">Activator</keyword>
<keyword id="KW-0156">Chromatin regulator</keyword>
<keyword id="KW-0217">Developmental protein</keyword>
<keyword id="KW-0238">DNA-binding</keyword>
<keyword id="KW-0539">Nucleus</keyword>
<keyword id="KW-0597">Phosphoprotein</keyword>
<keyword id="KW-1185">Reference proteome</keyword>
<keyword id="KW-0678">Repressor</keyword>
<keyword id="KW-0804">Transcription</keyword>
<keyword id="KW-0805">Transcription regulation</keyword>
<protein>
    <recommendedName>
        <fullName>Trithorax group protein osa</fullName>
    </recommendedName>
    <alternativeName>
        <fullName>Protein eyelid</fullName>
    </alternativeName>
</protein>
<accession>Q8IN94</accession>
<accession>O61603</accession>
<accession>Q9VEG7</accession>
<name>OSA_DROME</name>
<organism>
    <name type="scientific">Drosophila melanogaster</name>
    <name type="common">Fruit fly</name>
    <dbReference type="NCBI Taxonomy" id="7227"/>
    <lineage>
        <taxon>Eukaryota</taxon>
        <taxon>Metazoa</taxon>
        <taxon>Ecdysozoa</taxon>
        <taxon>Arthropoda</taxon>
        <taxon>Hexapoda</taxon>
        <taxon>Insecta</taxon>
        <taxon>Pterygota</taxon>
        <taxon>Neoptera</taxon>
        <taxon>Endopterygota</taxon>
        <taxon>Diptera</taxon>
        <taxon>Brachycera</taxon>
        <taxon>Muscomorpha</taxon>
        <taxon>Ephydroidea</taxon>
        <taxon>Drosophilidae</taxon>
        <taxon>Drosophila</taxon>
        <taxon>Sophophora</taxon>
    </lineage>
</organism>
<gene>
    <name type="primary">osa</name>
    <name type="synonym">eld</name>
    <name type="ORF">CG7467</name>
</gene>